<gene>
    <name evidence="1" type="primary">trmD</name>
    <name type="ordered locus">Dalk_4646</name>
</gene>
<protein>
    <recommendedName>
        <fullName evidence="1">tRNA (guanine-N(1)-)-methyltransferase</fullName>
        <ecNumber evidence="1">2.1.1.228</ecNumber>
    </recommendedName>
    <alternativeName>
        <fullName evidence="1">M1G-methyltransferase</fullName>
    </alternativeName>
    <alternativeName>
        <fullName evidence="1">tRNA [GM37] methyltransferase</fullName>
    </alternativeName>
</protein>
<feature type="chain" id="PRO_1000130159" description="tRNA (guanine-N(1)-)-methyltransferase">
    <location>
        <begin position="1"/>
        <end position="262"/>
    </location>
</feature>
<feature type="binding site" evidence="1">
    <location>
        <position position="112"/>
    </location>
    <ligand>
        <name>S-adenosyl-L-methionine</name>
        <dbReference type="ChEBI" id="CHEBI:59789"/>
    </ligand>
</feature>
<feature type="binding site" evidence="1">
    <location>
        <begin position="132"/>
        <end position="137"/>
    </location>
    <ligand>
        <name>S-adenosyl-L-methionine</name>
        <dbReference type="ChEBI" id="CHEBI:59789"/>
    </ligand>
</feature>
<organism>
    <name type="scientific">Desulfatibacillum aliphaticivorans</name>
    <dbReference type="NCBI Taxonomy" id="218208"/>
    <lineage>
        <taxon>Bacteria</taxon>
        <taxon>Pseudomonadati</taxon>
        <taxon>Thermodesulfobacteriota</taxon>
        <taxon>Desulfobacteria</taxon>
        <taxon>Desulfobacterales</taxon>
        <taxon>Desulfatibacillaceae</taxon>
        <taxon>Desulfatibacillum</taxon>
    </lineage>
</organism>
<keyword id="KW-0963">Cytoplasm</keyword>
<keyword id="KW-0489">Methyltransferase</keyword>
<keyword id="KW-1185">Reference proteome</keyword>
<keyword id="KW-0949">S-adenosyl-L-methionine</keyword>
<keyword id="KW-0808">Transferase</keyword>
<keyword id="KW-0819">tRNA processing</keyword>
<evidence type="ECO:0000255" key="1">
    <source>
        <dbReference type="HAMAP-Rule" id="MF_00605"/>
    </source>
</evidence>
<sequence>MNFVVLTLFPLMFPAFAGHGIVRRAVEQGLVDIEALNIRDFAEGRHSTTDDRPYGGGNGMVLKPEPLAKAIRAAKEVHTDARVVFLGPRGRLFDQETAARLAGGKDIIMVCGRYEGIDERIAATLIDEEISIGDYILSGGETAAMVVMDAIIRLIPGALGNESSAEQESFSNQLLEHSHFTRPPVFEGMETPEILLSGDHGKIDQWRTRASLLYTLANRPDLLEGREFSKEEITILENWGRQIADIIRTQGLHGPDALSRNR</sequence>
<reference key="1">
    <citation type="journal article" date="2012" name="Environ. Microbiol.">
        <title>The genome sequence of Desulfatibacillum alkenivorans AK-01: a blueprint for anaerobic alkane oxidation.</title>
        <authorList>
            <person name="Callaghan A.V."/>
            <person name="Morris B.E."/>
            <person name="Pereira I.A."/>
            <person name="McInerney M.J."/>
            <person name="Austin R.N."/>
            <person name="Groves J.T."/>
            <person name="Kukor J.J."/>
            <person name="Suflita J.M."/>
            <person name="Young L.Y."/>
            <person name="Zylstra G.J."/>
            <person name="Wawrik B."/>
        </authorList>
    </citation>
    <scope>NUCLEOTIDE SEQUENCE [LARGE SCALE GENOMIC DNA]</scope>
    <source>
        <strain>AK-01</strain>
    </source>
</reference>
<dbReference type="EC" id="2.1.1.228" evidence="1"/>
<dbReference type="EMBL" id="CP001322">
    <property type="protein sequence ID" value="ACL06324.1"/>
    <property type="molecule type" value="Genomic_DNA"/>
</dbReference>
<dbReference type="SMR" id="B8FNP3"/>
<dbReference type="KEGG" id="dal:Dalk_4646"/>
<dbReference type="eggNOG" id="COG0336">
    <property type="taxonomic scope" value="Bacteria"/>
</dbReference>
<dbReference type="HOGENOM" id="CLU_047363_0_1_7"/>
<dbReference type="Proteomes" id="UP000000739">
    <property type="component" value="Chromosome"/>
</dbReference>
<dbReference type="GO" id="GO:0005829">
    <property type="term" value="C:cytosol"/>
    <property type="evidence" value="ECO:0007669"/>
    <property type="project" value="TreeGrafter"/>
</dbReference>
<dbReference type="GO" id="GO:0052906">
    <property type="term" value="F:tRNA (guanine(37)-N1)-methyltransferase activity"/>
    <property type="evidence" value="ECO:0007669"/>
    <property type="project" value="UniProtKB-UniRule"/>
</dbReference>
<dbReference type="GO" id="GO:0002939">
    <property type="term" value="P:tRNA N1-guanine methylation"/>
    <property type="evidence" value="ECO:0007669"/>
    <property type="project" value="TreeGrafter"/>
</dbReference>
<dbReference type="CDD" id="cd18080">
    <property type="entry name" value="TrmD-like"/>
    <property type="match status" value="1"/>
</dbReference>
<dbReference type="FunFam" id="3.40.1280.10:FF:000001">
    <property type="entry name" value="tRNA (guanine-N(1)-)-methyltransferase"/>
    <property type="match status" value="1"/>
</dbReference>
<dbReference type="Gene3D" id="3.40.1280.10">
    <property type="match status" value="1"/>
</dbReference>
<dbReference type="Gene3D" id="1.10.1270.20">
    <property type="entry name" value="tRNA(m1g37)methyltransferase, domain 2"/>
    <property type="match status" value="1"/>
</dbReference>
<dbReference type="HAMAP" id="MF_00605">
    <property type="entry name" value="TrmD"/>
    <property type="match status" value="1"/>
</dbReference>
<dbReference type="InterPro" id="IPR029028">
    <property type="entry name" value="Alpha/beta_knot_MTases"/>
</dbReference>
<dbReference type="InterPro" id="IPR023148">
    <property type="entry name" value="tRNA_m1G_MeTrfase_C_sf"/>
</dbReference>
<dbReference type="InterPro" id="IPR002649">
    <property type="entry name" value="tRNA_m1G_MeTrfase_TrmD"/>
</dbReference>
<dbReference type="InterPro" id="IPR029026">
    <property type="entry name" value="tRNA_m1G_MTases_N"/>
</dbReference>
<dbReference type="InterPro" id="IPR016009">
    <property type="entry name" value="tRNA_MeTrfase_TRMD/TRM10"/>
</dbReference>
<dbReference type="NCBIfam" id="NF000648">
    <property type="entry name" value="PRK00026.1"/>
    <property type="match status" value="1"/>
</dbReference>
<dbReference type="NCBIfam" id="TIGR00088">
    <property type="entry name" value="trmD"/>
    <property type="match status" value="1"/>
</dbReference>
<dbReference type="PANTHER" id="PTHR46417">
    <property type="entry name" value="TRNA (GUANINE-N(1)-)-METHYLTRANSFERASE"/>
    <property type="match status" value="1"/>
</dbReference>
<dbReference type="PANTHER" id="PTHR46417:SF1">
    <property type="entry name" value="TRNA (GUANINE-N(1)-)-METHYLTRANSFERASE"/>
    <property type="match status" value="1"/>
</dbReference>
<dbReference type="Pfam" id="PF01746">
    <property type="entry name" value="tRNA_m1G_MT"/>
    <property type="match status" value="1"/>
</dbReference>
<dbReference type="PIRSF" id="PIRSF000386">
    <property type="entry name" value="tRNA_mtase"/>
    <property type="match status" value="1"/>
</dbReference>
<dbReference type="SUPFAM" id="SSF75217">
    <property type="entry name" value="alpha/beta knot"/>
    <property type="match status" value="1"/>
</dbReference>
<accession>B8FNP3</accession>
<proteinExistence type="inferred from homology"/>
<comment type="function">
    <text evidence="1">Specifically methylates guanosine-37 in various tRNAs.</text>
</comment>
<comment type="catalytic activity">
    <reaction evidence="1">
        <text>guanosine(37) in tRNA + S-adenosyl-L-methionine = N(1)-methylguanosine(37) in tRNA + S-adenosyl-L-homocysteine + H(+)</text>
        <dbReference type="Rhea" id="RHEA:36899"/>
        <dbReference type="Rhea" id="RHEA-COMP:10145"/>
        <dbReference type="Rhea" id="RHEA-COMP:10147"/>
        <dbReference type="ChEBI" id="CHEBI:15378"/>
        <dbReference type="ChEBI" id="CHEBI:57856"/>
        <dbReference type="ChEBI" id="CHEBI:59789"/>
        <dbReference type="ChEBI" id="CHEBI:73542"/>
        <dbReference type="ChEBI" id="CHEBI:74269"/>
        <dbReference type="EC" id="2.1.1.228"/>
    </reaction>
</comment>
<comment type="subunit">
    <text evidence="1">Homodimer.</text>
</comment>
<comment type="subcellular location">
    <subcellularLocation>
        <location evidence="1">Cytoplasm</location>
    </subcellularLocation>
</comment>
<comment type="similarity">
    <text evidence="1">Belongs to the RNA methyltransferase TrmD family.</text>
</comment>
<name>TRMD_DESAL</name>